<accession>Q128E6</accession>
<feature type="chain" id="PRO_0000304468" description="2-dehydro-3-deoxyphosphooctonate aldolase">
    <location>
        <begin position="1"/>
        <end position="285"/>
    </location>
</feature>
<protein>
    <recommendedName>
        <fullName evidence="1">2-dehydro-3-deoxyphosphooctonate aldolase</fullName>
        <ecNumber evidence="1">2.5.1.55</ecNumber>
    </recommendedName>
    <alternativeName>
        <fullName evidence="1">3-deoxy-D-manno-octulosonic acid 8-phosphate synthase</fullName>
    </alternativeName>
    <alternativeName>
        <fullName evidence="1">KDO-8-phosphate synthase</fullName>
        <shortName evidence="1">KDO 8-P synthase</shortName>
        <shortName evidence="1">KDOPS</shortName>
    </alternativeName>
    <alternativeName>
        <fullName evidence="1">Phospho-2-dehydro-3-deoxyoctonate aldolase</fullName>
    </alternativeName>
</protein>
<gene>
    <name evidence="1" type="primary">kdsA</name>
    <name type="ordered locus">Bpro_3182</name>
</gene>
<dbReference type="EC" id="2.5.1.55" evidence="1"/>
<dbReference type="EMBL" id="CP000316">
    <property type="protein sequence ID" value="ABE45096.1"/>
    <property type="molecule type" value="Genomic_DNA"/>
</dbReference>
<dbReference type="RefSeq" id="WP_011484091.1">
    <property type="nucleotide sequence ID" value="NC_007948.1"/>
</dbReference>
<dbReference type="SMR" id="Q128E6"/>
<dbReference type="STRING" id="296591.Bpro_3182"/>
<dbReference type="KEGG" id="pol:Bpro_3182"/>
<dbReference type="eggNOG" id="COG2877">
    <property type="taxonomic scope" value="Bacteria"/>
</dbReference>
<dbReference type="HOGENOM" id="CLU_036666_0_0_4"/>
<dbReference type="OrthoDB" id="9776934at2"/>
<dbReference type="UniPathway" id="UPA00030"/>
<dbReference type="UniPathway" id="UPA00357">
    <property type="reaction ID" value="UER00474"/>
</dbReference>
<dbReference type="Proteomes" id="UP000001983">
    <property type="component" value="Chromosome"/>
</dbReference>
<dbReference type="GO" id="GO:0005737">
    <property type="term" value="C:cytoplasm"/>
    <property type="evidence" value="ECO:0007669"/>
    <property type="project" value="UniProtKB-SubCell"/>
</dbReference>
<dbReference type="GO" id="GO:0008676">
    <property type="term" value="F:3-deoxy-8-phosphooctulonate synthase activity"/>
    <property type="evidence" value="ECO:0007669"/>
    <property type="project" value="UniProtKB-UniRule"/>
</dbReference>
<dbReference type="GO" id="GO:0019294">
    <property type="term" value="P:keto-3-deoxy-D-manno-octulosonic acid biosynthetic process"/>
    <property type="evidence" value="ECO:0007669"/>
    <property type="project" value="UniProtKB-UniRule"/>
</dbReference>
<dbReference type="Gene3D" id="3.20.20.70">
    <property type="entry name" value="Aldolase class I"/>
    <property type="match status" value="1"/>
</dbReference>
<dbReference type="HAMAP" id="MF_00056">
    <property type="entry name" value="KDO8P_synth"/>
    <property type="match status" value="1"/>
</dbReference>
<dbReference type="InterPro" id="IPR013785">
    <property type="entry name" value="Aldolase_TIM"/>
</dbReference>
<dbReference type="InterPro" id="IPR006218">
    <property type="entry name" value="DAHP1/KDSA"/>
</dbReference>
<dbReference type="InterPro" id="IPR006269">
    <property type="entry name" value="KDO8P_synthase"/>
</dbReference>
<dbReference type="NCBIfam" id="TIGR01362">
    <property type="entry name" value="KDO8P_synth"/>
    <property type="match status" value="1"/>
</dbReference>
<dbReference type="NCBIfam" id="NF003543">
    <property type="entry name" value="PRK05198.1"/>
    <property type="match status" value="1"/>
</dbReference>
<dbReference type="PANTHER" id="PTHR21057">
    <property type="entry name" value="PHOSPHO-2-DEHYDRO-3-DEOXYHEPTONATE ALDOLASE"/>
    <property type="match status" value="1"/>
</dbReference>
<dbReference type="Pfam" id="PF00793">
    <property type="entry name" value="DAHP_synth_1"/>
    <property type="match status" value="1"/>
</dbReference>
<dbReference type="SUPFAM" id="SSF51569">
    <property type="entry name" value="Aldolase"/>
    <property type="match status" value="1"/>
</dbReference>
<evidence type="ECO:0000255" key="1">
    <source>
        <dbReference type="HAMAP-Rule" id="MF_00056"/>
    </source>
</evidence>
<keyword id="KW-0963">Cytoplasm</keyword>
<keyword id="KW-0448">Lipopolysaccharide biosynthesis</keyword>
<keyword id="KW-1185">Reference proteome</keyword>
<keyword id="KW-0808">Transferase</keyword>
<reference key="1">
    <citation type="journal article" date="2008" name="Appl. Environ. Microbiol.">
        <title>The genome of Polaromonas sp. strain JS666: insights into the evolution of a hydrocarbon- and xenobiotic-degrading bacterium, and features of relevance to biotechnology.</title>
        <authorList>
            <person name="Mattes T.E."/>
            <person name="Alexander A.K."/>
            <person name="Richardson P.M."/>
            <person name="Munk A.C."/>
            <person name="Han C.S."/>
            <person name="Stothard P."/>
            <person name="Coleman N.V."/>
        </authorList>
    </citation>
    <scope>NUCLEOTIDE SEQUENCE [LARGE SCALE GENOMIC DNA]</scope>
    <source>
        <strain>JS666 / ATCC BAA-500</strain>
    </source>
</reference>
<sequence>MKLCGFDIGLNQPFFLIAGPCVVESEQLQMDTAGTLKEITSSLGIPFIFKSSYDKANRSSGTSFRGPGMVKGLEILAKVKRELNLPLLTDVHSEADIATVASVVDVLQTPAFLCRQTDFIHAVAQSGKPVNIKKGQFLAPGDMKNVIDKARAAAREKGLNEDNFMACERGASFGYNNLVSDMRSLAIMRETNAPVVFDATHSVQLPGGQGTSSGGQREMVPVLARAAVAVGVAGLFMETHPDPAKALSDGPNAVPLKHMKALLETLLELDRVTKKNGYLENSFGA</sequence>
<organism>
    <name type="scientific">Polaromonas sp. (strain JS666 / ATCC BAA-500)</name>
    <dbReference type="NCBI Taxonomy" id="296591"/>
    <lineage>
        <taxon>Bacteria</taxon>
        <taxon>Pseudomonadati</taxon>
        <taxon>Pseudomonadota</taxon>
        <taxon>Betaproteobacteria</taxon>
        <taxon>Burkholderiales</taxon>
        <taxon>Comamonadaceae</taxon>
        <taxon>Polaromonas</taxon>
    </lineage>
</organism>
<proteinExistence type="inferred from homology"/>
<name>KDSA_POLSJ</name>
<comment type="catalytic activity">
    <reaction evidence="1">
        <text>D-arabinose 5-phosphate + phosphoenolpyruvate + H2O = 3-deoxy-alpha-D-manno-2-octulosonate-8-phosphate + phosphate</text>
        <dbReference type="Rhea" id="RHEA:14053"/>
        <dbReference type="ChEBI" id="CHEBI:15377"/>
        <dbReference type="ChEBI" id="CHEBI:43474"/>
        <dbReference type="ChEBI" id="CHEBI:57693"/>
        <dbReference type="ChEBI" id="CHEBI:58702"/>
        <dbReference type="ChEBI" id="CHEBI:85985"/>
        <dbReference type="EC" id="2.5.1.55"/>
    </reaction>
</comment>
<comment type="pathway">
    <text evidence="1">Carbohydrate biosynthesis; 3-deoxy-D-manno-octulosonate biosynthesis; 3-deoxy-D-manno-octulosonate from D-ribulose 5-phosphate: step 2/3.</text>
</comment>
<comment type="pathway">
    <text evidence="1">Bacterial outer membrane biogenesis; lipopolysaccharide biosynthesis.</text>
</comment>
<comment type="subcellular location">
    <subcellularLocation>
        <location evidence="1">Cytoplasm</location>
    </subcellularLocation>
</comment>
<comment type="similarity">
    <text evidence="1">Belongs to the KdsA family.</text>
</comment>